<feature type="chain" id="PRO_0000222051" description="Enzymatic polyprotein">
    <location>
        <begin position="1"/>
        <end position="674"/>
    </location>
</feature>
<feature type="domain" description="Reverse transcriptase" evidence="2">
    <location>
        <begin position="267"/>
        <end position="447"/>
    </location>
</feature>
<feature type="region of interest" description="Protease" evidence="1">
    <location>
        <begin position="40"/>
        <end position="130"/>
    </location>
</feature>
<feature type="active site">
    <location>
        <position position="47"/>
    </location>
</feature>
<sequence length="674" mass="78164">MDHLLQKTQIQNQTEQVMNITNPNSIYIKGRLYFKGYKKIELHCFVDTGASLCIASKFVIPEEHWINAERPIMVKIADGSSITINKVCRDIDLIIAGEIFHIPTVYQQESGIDFIIGNNFCQLYEPFIQFTDRVIFTKDRTYPVHIAKLTRAVRVGTEGFLESMKKRSKTQQPEPVNISTNKIAILSEGRRLSEEKLFITQQRMQKIEELLEKVCSENPLDPNKTKQWMKASIKLSDPSKAIKVKPMKYSPMDREEFDKQIKELLDLKVIKPSKSPHMAPAFLVNNEAEKRRGKKRMVVNYKAMNKATVGDAYNPPNKDELLTLIRGKKIFSSFDCKSGFWQVLLDQESRPLTAFTCPQGHYEWNVVPFGLKQAPSIFQRHMDEAFRVFRKFCCVYVDDILVFSNNEEDHLLHVAMILQKCNQHGIILSKKKAQLFKKKINFLGLEIDEGTHKPQGHILEHINKFPDTLEDKKQLQRFLGILTYASDYIPKLAQIRKPLQAKLKENVPWKWTKEDTLYMQKVKKNLQGFPPLHHPLPEEKLIIETDASDDYWGGMLKAIKINEGTNTELICRYASGSFKAAEKNYHSNDKETLAVINTIKKFSIYLTPVHFLIRTDNTHFKSFVNLNYKGDSKLGRNIRWQAWLSHYSFDVEHIKGTDNHFADFLSREFNRVNS</sequence>
<protein>
    <recommendedName>
        <fullName>Enzymatic polyprotein</fullName>
    </recommendedName>
    <domain>
        <recommendedName>
            <fullName>Aspartic protease</fullName>
            <ecNumber>3.4.23.-</ecNumber>
        </recommendedName>
    </domain>
    <domain>
        <recommendedName>
            <fullName>Endonuclease</fullName>
        </recommendedName>
    </domain>
    <domain>
        <recommendedName>
            <fullName>Reverse transcriptase</fullName>
            <ecNumber>2.7.7.49</ecNumber>
        </recommendedName>
    </domain>
</protein>
<name>POL_CAMVD</name>
<dbReference type="EC" id="3.4.23.-"/>
<dbReference type="EC" id="2.7.7.49"/>
<dbReference type="EMBL" id="M10376">
    <property type="protein sequence ID" value="AAA46350.1"/>
    <property type="status" value="ALT_INIT"/>
    <property type="molecule type" value="Genomic_DNA"/>
</dbReference>
<dbReference type="SMR" id="P03556"/>
<dbReference type="MEROPS" id="A03.001"/>
<dbReference type="Proteomes" id="UP000008439">
    <property type="component" value="Genome"/>
</dbReference>
<dbReference type="GO" id="GO:0004190">
    <property type="term" value="F:aspartic-type endopeptidase activity"/>
    <property type="evidence" value="ECO:0007669"/>
    <property type="project" value="UniProtKB-KW"/>
</dbReference>
<dbReference type="GO" id="GO:0004519">
    <property type="term" value="F:endonuclease activity"/>
    <property type="evidence" value="ECO:0007669"/>
    <property type="project" value="UniProtKB-KW"/>
</dbReference>
<dbReference type="GO" id="GO:0003964">
    <property type="term" value="F:RNA-directed DNA polymerase activity"/>
    <property type="evidence" value="ECO:0007669"/>
    <property type="project" value="UniProtKB-KW"/>
</dbReference>
<dbReference type="GO" id="GO:0006508">
    <property type="term" value="P:proteolysis"/>
    <property type="evidence" value="ECO:0007669"/>
    <property type="project" value="UniProtKB-KW"/>
</dbReference>
<dbReference type="CDD" id="cd00303">
    <property type="entry name" value="retropepsin_like"/>
    <property type="match status" value="1"/>
</dbReference>
<dbReference type="CDD" id="cd09274">
    <property type="entry name" value="RNase_HI_RT_Ty3"/>
    <property type="match status" value="1"/>
</dbReference>
<dbReference type="CDD" id="cd01647">
    <property type="entry name" value="RT_LTR"/>
    <property type="match status" value="1"/>
</dbReference>
<dbReference type="Gene3D" id="3.30.70.270">
    <property type="match status" value="2"/>
</dbReference>
<dbReference type="Gene3D" id="2.40.70.10">
    <property type="entry name" value="Acid Proteases"/>
    <property type="match status" value="1"/>
</dbReference>
<dbReference type="Gene3D" id="3.10.10.10">
    <property type="entry name" value="HIV Type 1 Reverse Transcriptase, subunit A, domain 1"/>
    <property type="match status" value="1"/>
</dbReference>
<dbReference type="InterPro" id="IPR043502">
    <property type="entry name" value="DNA/RNA_pol_sf"/>
</dbReference>
<dbReference type="InterPro" id="IPR000588">
    <property type="entry name" value="Pept_A3A"/>
</dbReference>
<dbReference type="InterPro" id="IPR021109">
    <property type="entry name" value="Peptidase_aspartic_dom_sf"/>
</dbReference>
<dbReference type="InterPro" id="IPR043128">
    <property type="entry name" value="Rev_trsase/Diguanyl_cyclase"/>
</dbReference>
<dbReference type="InterPro" id="IPR000477">
    <property type="entry name" value="RT_dom"/>
</dbReference>
<dbReference type="InterPro" id="IPR041373">
    <property type="entry name" value="RT_RNaseH"/>
</dbReference>
<dbReference type="InterPro" id="IPR051320">
    <property type="entry name" value="Viral_Replic_Matur_Polypro"/>
</dbReference>
<dbReference type="PANTHER" id="PTHR33064">
    <property type="entry name" value="POL PROTEIN"/>
    <property type="match status" value="1"/>
</dbReference>
<dbReference type="PANTHER" id="PTHR33064:SF37">
    <property type="entry name" value="RIBONUCLEASE H"/>
    <property type="match status" value="1"/>
</dbReference>
<dbReference type="Pfam" id="PF02160">
    <property type="entry name" value="Peptidase_A3"/>
    <property type="match status" value="1"/>
</dbReference>
<dbReference type="Pfam" id="PF17917">
    <property type="entry name" value="RT_RNaseH"/>
    <property type="match status" value="1"/>
</dbReference>
<dbReference type="Pfam" id="PF00078">
    <property type="entry name" value="RVT_1"/>
    <property type="match status" value="1"/>
</dbReference>
<dbReference type="PRINTS" id="PR00731">
    <property type="entry name" value="CAULIMOPTASE"/>
</dbReference>
<dbReference type="SUPFAM" id="SSF56672">
    <property type="entry name" value="DNA/RNA polymerases"/>
    <property type="match status" value="1"/>
</dbReference>
<dbReference type="PROSITE" id="PS50878">
    <property type="entry name" value="RT_POL"/>
    <property type="match status" value="1"/>
</dbReference>
<organismHost>
    <name type="scientific">Arabidopsis thaliana</name>
    <name type="common">Mouse-ear cress</name>
    <dbReference type="NCBI Taxonomy" id="3702"/>
</organismHost>
<organismHost>
    <name type="scientific">Brassica</name>
    <dbReference type="NCBI Taxonomy" id="3705"/>
</organismHost>
<organismHost>
    <name type="scientific">Raphanus</name>
    <dbReference type="NCBI Taxonomy" id="3725"/>
</organismHost>
<keyword id="KW-0064">Aspartyl protease</keyword>
<keyword id="KW-0255">Endonuclease</keyword>
<keyword id="KW-0378">Hydrolase</keyword>
<keyword id="KW-0540">Nuclease</keyword>
<keyword id="KW-0548">Nucleotidyltransferase</keyword>
<keyword id="KW-0645">Protease</keyword>
<keyword id="KW-0695">RNA-directed DNA polymerase</keyword>
<keyword id="KW-0808">Transferase</keyword>
<gene>
    <name type="ORF">ORF V</name>
</gene>
<comment type="function">
    <text evidence="1">Encodes for at least two polypeptides: protease (PR) and reverse transcriptase (RT). The protease processes the polyprotein in cis. Reverse transcriptase is multifunctional enzyme that converts the viral RNA genome into dsDNA in viral cytoplasmic capsids. This enzyme displays a DNA polymerase activity that can copy either DNA or RNA templates, and a ribonuclease H (RNase H) activity that cleaves the RNA strand of RNA-DNA heteroduplexes in a partially processive 3'- to 5'-endonucleasic mode. Neo-synthesized pregenomic RNA (pgRNA) are encapsidated, and reverse-transcribed inside the nucleocapsid. Partial (+)DNA is synthesized from the (-)DNA template and generates the relaxed circular DNA (RC-DNA) genome. After budding and infection, the RC-DNA migrates in the nucleus, and is converted into a plasmid-like covalently closed circular DNA (cccDNA) (By similarity).</text>
</comment>
<comment type="catalytic activity">
    <reaction evidence="2">
        <text>DNA(n) + a 2'-deoxyribonucleoside 5'-triphosphate = DNA(n+1) + diphosphate</text>
        <dbReference type="Rhea" id="RHEA:22508"/>
        <dbReference type="Rhea" id="RHEA-COMP:17339"/>
        <dbReference type="Rhea" id="RHEA-COMP:17340"/>
        <dbReference type="ChEBI" id="CHEBI:33019"/>
        <dbReference type="ChEBI" id="CHEBI:61560"/>
        <dbReference type="ChEBI" id="CHEBI:173112"/>
        <dbReference type="EC" id="2.7.7.49"/>
    </reaction>
</comment>
<comment type="domain">
    <text evidence="1">The polymerase/reverse transcriptase (RT) and ribonuclease H (RH) domains are structured in five subdomains: finger, palm, thumb, connection and RNase H. Within the palm subdomain, the 'primer grip' region is thought to be involved in the positioning of the primer terminus for accommodating the incoming nucleotide. The RH domain stabilizes the association of RT with primer-template (By similarity).</text>
</comment>
<comment type="similarity">
    <text evidence="3">Belongs to the caulimoviridae enzymatic polyprotein family.</text>
</comment>
<comment type="sequence caution" evidence="3">
    <conflict type="erroneous initiation">
        <sequence resource="EMBL-CDS" id="AAA46350"/>
    </conflict>
</comment>
<evidence type="ECO:0000250" key="1"/>
<evidence type="ECO:0000255" key="2">
    <source>
        <dbReference type="PROSITE-ProRule" id="PRU00405"/>
    </source>
</evidence>
<evidence type="ECO:0000305" key="3"/>
<reference key="1">
    <citation type="journal article" date="1982" name="Gene">
        <title>Nucleotide sequence of DNA from an altered-virulence isolate D/H of the cauliflower mosaic virus.</title>
        <authorList>
            <person name="Balazs E."/>
            <person name="Guilley H."/>
            <person name="Jonard G."/>
            <person name="Richards K."/>
        </authorList>
    </citation>
    <scope>NUCLEOTIDE SEQUENCE [GENOMIC DNA]</scope>
</reference>
<accession>P03556</accession>
<proteinExistence type="inferred from homology"/>
<organism>
    <name type="scientific">Cauliflower mosaic virus (strain D/H)</name>
    <name type="common">CaMV</name>
    <dbReference type="NCBI Taxonomy" id="10645"/>
    <lineage>
        <taxon>Viruses</taxon>
        <taxon>Riboviria</taxon>
        <taxon>Pararnavirae</taxon>
        <taxon>Artverviricota</taxon>
        <taxon>Revtraviricetes</taxon>
        <taxon>Ortervirales</taxon>
        <taxon>Caulimoviridae</taxon>
        <taxon>Caulimovirus</taxon>
        <taxon>Caulimovirus tessellobrassicae</taxon>
    </lineage>
</organism>